<accession>A3KP48</accession>
<dbReference type="EMBL" id="BC134160">
    <property type="protein sequence ID" value="AAI34161.1"/>
    <property type="molecule type" value="mRNA"/>
</dbReference>
<dbReference type="RefSeq" id="NP_001082812.1">
    <property type="nucleotide sequence ID" value="NM_001089343.1"/>
</dbReference>
<dbReference type="SMR" id="A3KP48"/>
<dbReference type="FunCoup" id="A3KP48">
    <property type="interactions" value="2223"/>
</dbReference>
<dbReference type="STRING" id="7955.ENSDARP00000123357"/>
<dbReference type="PaxDb" id="7955-ENSDARP00000123357"/>
<dbReference type="PeptideAtlas" id="A3KP48"/>
<dbReference type="GeneID" id="336363"/>
<dbReference type="KEGG" id="dre:336363"/>
<dbReference type="AGR" id="ZFIN:ZDB-GENE-030131-8307"/>
<dbReference type="CTD" id="26355"/>
<dbReference type="ZFIN" id="ZDB-GENE-030131-8307">
    <property type="gene designation" value="fam162a"/>
</dbReference>
<dbReference type="eggNOG" id="ENOG502S1ZH">
    <property type="taxonomic scope" value="Eukaryota"/>
</dbReference>
<dbReference type="InParanoid" id="A3KP48"/>
<dbReference type="OrthoDB" id="8193498at2759"/>
<dbReference type="PhylomeDB" id="A3KP48"/>
<dbReference type="PRO" id="PR:A3KP48"/>
<dbReference type="Proteomes" id="UP000000437">
    <property type="component" value="Chromosome 24"/>
</dbReference>
<dbReference type="GO" id="GO:0016020">
    <property type="term" value="C:membrane"/>
    <property type="evidence" value="ECO:0007669"/>
    <property type="project" value="UniProtKB-SubCell"/>
</dbReference>
<dbReference type="GO" id="GO:0005739">
    <property type="term" value="C:mitochondrion"/>
    <property type="evidence" value="ECO:0000318"/>
    <property type="project" value="GO_Central"/>
</dbReference>
<dbReference type="GO" id="GO:0071456">
    <property type="term" value="P:cellular response to hypoxia"/>
    <property type="evidence" value="ECO:0000318"/>
    <property type="project" value="GO_Central"/>
</dbReference>
<dbReference type="GO" id="GO:0051402">
    <property type="term" value="P:neuron apoptotic process"/>
    <property type="evidence" value="ECO:0000318"/>
    <property type="project" value="GO_Central"/>
</dbReference>
<dbReference type="GO" id="GO:0090200">
    <property type="term" value="P:positive regulation of release of cytochrome c from mitochondria"/>
    <property type="evidence" value="ECO:0000318"/>
    <property type="project" value="GO_Central"/>
</dbReference>
<dbReference type="InterPro" id="IPR009432">
    <property type="entry name" value="DUF1075"/>
</dbReference>
<dbReference type="PANTHER" id="PTHR13674">
    <property type="entry name" value="GROWTH AND TRANSFORMATION-DEPENDENT PROTEIN"/>
    <property type="match status" value="1"/>
</dbReference>
<dbReference type="PANTHER" id="PTHR13674:SF2">
    <property type="entry name" value="PROTEIN FAM162A"/>
    <property type="match status" value="1"/>
</dbReference>
<dbReference type="Pfam" id="PF06388">
    <property type="entry name" value="DUF1075"/>
    <property type="match status" value="1"/>
</dbReference>
<comment type="subcellular location">
    <subcellularLocation>
        <location evidence="2">Membrane</location>
        <topology evidence="2">Single-pass membrane protein</topology>
    </subcellularLocation>
</comment>
<comment type="similarity">
    <text evidence="2">Belongs to the UPF0389 family.</text>
</comment>
<gene>
    <name type="primary">fam162b</name>
    <name type="ORF">zgc:162943</name>
</gene>
<name>F162B_DANRE</name>
<evidence type="ECO:0000255" key="1"/>
<evidence type="ECO:0000305" key="2"/>
<organism>
    <name type="scientific">Danio rerio</name>
    <name type="common">Zebrafish</name>
    <name type="synonym">Brachydanio rerio</name>
    <dbReference type="NCBI Taxonomy" id="7955"/>
    <lineage>
        <taxon>Eukaryota</taxon>
        <taxon>Metazoa</taxon>
        <taxon>Chordata</taxon>
        <taxon>Craniata</taxon>
        <taxon>Vertebrata</taxon>
        <taxon>Euteleostomi</taxon>
        <taxon>Actinopterygii</taxon>
        <taxon>Neopterygii</taxon>
        <taxon>Teleostei</taxon>
        <taxon>Ostariophysi</taxon>
        <taxon>Cypriniformes</taxon>
        <taxon>Danionidae</taxon>
        <taxon>Danioninae</taxon>
        <taxon>Danio</taxon>
    </lineage>
</organism>
<sequence>MFSMIRGPRAAFGTLIGQWRRGMMTTGNRRLCIKPQEGPSASPQTQRPGFKLPGYRPSDWDKKMLMWSGRFKTVEQIPEFVSFEMIDAARNRVRVKACYIMMGLTIFACLVMIVSGKKAVSRKESLIAINMEKKAKWREDAQREKEENALDAKAQ</sequence>
<keyword id="KW-0472">Membrane</keyword>
<keyword id="KW-1185">Reference proteome</keyword>
<keyword id="KW-0812">Transmembrane</keyword>
<keyword id="KW-1133">Transmembrane helix</keyword>
<feature type="chain" id="PRO_0000343655" description="Protein FAM162B">
    <location>
        <begin position="1"/>
        <end position="155"/>
    </location>
</feature>
<feature type="transmembrane region" description="Helical" evidence="1">
    <location>
        <begin position="95"/>
        <end position="114"/>
    </location>
</feature>
<protein>
    <recommendedName>
        <fullName>Protein FAM162B</fullName>
    </recommendedName>
</protein>
<proteinExistence type="evidence at transcript level"/>
<reference key="1">
    <citation type="submission" date="2007-03" db="EMBL/GenBank/DDBJ databases">
        <authorList>
            <consortium name="NIH - Zebrafish Gene Collection (ZGC) project"/>
        </authorList>
    </citation>
    <scope>NUCLEOTIDE SEQUENCE [LARGE SCALE MRNA]</scope>
    <source>
        <tissue>Gill</tissue>
    </source>
</reference>